<accession>Q321V9</accession>
<dbReference type="EC" id="3.6.1.-" evidence="1"/>
<dbReference type="EMBL" id="CP000036">
    <property type="protein sequence ID" value="ABB65899.1"/>
    <property type="molecule type" value="Genomic_DNA"/>
</dbReference>
<dbReference type="RefSeq" id="WP_000456718.1">
    <property type="nucleotide sequence ID" value="NC_007613.1"/>
</dbReference>
<dbReference type="SMR" id="Q321V9"/>
<dbReference type="KEGG" id="sbo:SBO_1271"/>
<dbReference type="HOGENOM" id="CLU_040940_5_2_6"/>
<dbReference type="Proteomes" id="UP000007067">
    <property type="component" value="Chromosome"/>
</dbReference>
<dbReference type="GO" id="GO:0010945">
    <property type="term" value="F:coenzyme A diphosphatase activity"/>
    <property type="evidence" value="ECO:0007669"/>
    <property type="project" value="InterPro"/>
</dbReference>
<dbReference type="GO" id="GO:0000287">
    <property type="term" value="F:magnesium ion binding"/>
    <property type="evidence" value="ECO:0007669"/>
    <property type="project" value="UniProtKB-UniRule"/>
</dbReference>
<dbReference type="GO" id="GO:0030145">
    <property type="term" value="F:manganese ion binding"/>
    <property type="evidence" value="ECO:0007669"/>
    <property type="project" value="UniProtKB-UniRule"/>
</dbReference>
<dbReference type="GO" id="GO:0009132">
    <property type="term" value="P:nucleoside diphosphate metabolic process"/>
    <property type="evidence" value="ECO:0007669"/>
    <property type="project" value="InterPro"/>
</dbReference>
<dbReference type="CDD" id="cd03426">
    <property type="entry name" value="NUDIX_CoAse_Nudt7"/>
    <property type="match status" value="1"/>
</dbReference>
<dbReference type="FunFam" id="3.90.79.10:FF:000013">
    <property type="entry name" value="Uncharacterized Nudix hydrolase NudL"/>
    <property type="match status" value="1"/>
</dbReference>
<dbReference type="Gene3D" id="3.90.79.10">
    <property type="entry name" value="Nucleoside Triphosphate Pyrophosphohydrolase"/>
    <property type="match status" value="1"/>
</dbReference>
<dbReference type="HAMAP" id="MF_01592">
    <property type="entry name" value="Nudix_NudL"/>
    <property type="match status" value="1"/>
</dbReference>
<dbReference type="InterPro" id="IPR045121">
    <property type="entry name" value="CoAse"/>
</dbReference>
<dbReference type="InterPro" id="IPR015797">
    <property type="entry name" value="NUDIX_hydrolase-like_dom_sf"/>
</dbReference>
<dbReference type="InterPro" id="IPR000086">
    <property type="entry name" value="NUDIX_hydrolase_dom"/>
</dbReference>
<dbReference type="InterPro" id="IPR000059">
    <property type="entry name" value="NUDIX_hydrolase_NudL_CS"/>
</dbReference>
<dbReference type="InterPro" id="IPR023735">
    <property type="entry name" value="Nudix_NudL"/>
</dbReference>
<dbReference type="NCBIfam" id="NF007980">
    <property type="entry name" value="PRK10707.1"/>
    <property type="match status" value="1"/>
</dbReference>
<dbReference type="PANTHER" id="PTHR12992:SF11">
    <property type="entry name" value="MITOCHONDRIAL COENZYME A DIPHOSPHATASE NUDT8"/>
    <property type="match status" value="1"/>
</dbReference>
<dbReference type="PANTHER" id="PTHR12992">
    <property type="entry name" value="NUDIX HYDROLASE"/>
    <property type="match status" value="1"/>
</dbReference>
<dbReference type="Pfam" id="PF00293">
    <property type="entry name" value="NUDIX"/>
    <property type="match status" value="1"/>
</dbReference>
<dbReference type="SUPFAM" id="SSF55811">
    <property type="entry name" value="Nudix"/>
    <property type="match status" value="1"/>
</dbReference>
<dbReference type="PROSITE" id="PS51462">
    <property type="entry name" value="NUDIX"/>
    <property type="match status" value="1"/>
</dbReference>
<dbReference type="PROSITE" id="PS01293">
    <property type="entry name" value="NUDIX_COA"/>
    <property type="match status" value="1"/>
</dbReference>
<name>NUDL_SHIBS</name>
<organism>
    <name type="scientific">Shigella boydii serotype 4 (strain Sb227)</name>
    <dbReference type="NCBI Taxonomy" id="300268"/>
    <lineage>
        <taxon>Bacteria</taxon>
        <taxon>Pseudomonadati</taxon>
        <taxon>Pseudomonadota</taxon>
        <taxon>Gammaproteobacteria</taxon>
        <taxon>Enterobacterales</taxon>
        <taxon>Enterobacteriaceae</taxon>
        <taxon>Shigella</taxon>
    </lineage>
</organism>
<proteinExistence type="inferred from homology"/>
<comment type="function">
    <text evidence="1">Probably mediates the hydrolysis of some nucleoside diphosphate derivatives.</text>
</comment>
<comment type="cofactor">
    <cofactor evidence="1">
        <name>Mn(2+)</name>
        <dbReference type="ChEBI" id="CHEBI:29035"/>
    </cofactor>
    <cofactor evidence="1">
        <name>Mg(2+)</name>
        <dbReference type="ChEBI" id="CHEBI:18420"/>
    </cofactor>
</comment>
<comment type="similarity">
    <text evidence="1">Belongs to the Nudix hydrolase family. PCD1 subfamily.</text>
</comment>
<protein>
    <recommendedName>
        <fullName evidence="1">Uncharacterized Nudix hydrolase NudL</fullName>
        <ecNumber evidence="1">3.6.1.-</ecNumber>
    </recommendedName>
</protein>
<gene>
    <name evidence="1" type="primary">nudL</name>
    <name type="ordered locus">SBO_1271</name>
</gene>
<keyword id="KW-0378">Hydrolase</keyword>
<keyword id="KW-0460">Magnesium</keyword>
<keyword id="KW-0464">Manganese</keyword>
<keyword id="KW-0479">Metal-binding</keyword>
<reference key="1">
    <citation type="journal article" date="2005" name="Nucleic Acids Res.">
        <title>Genome dynamics and diversity of Shigella species, the etiologic agents of bacillary dysentery.</title>
        <authorList>
            <person name="Yang F."/>
            <person name="Yang J."/>
            <person name="Zhang X."/>
            <person name="Chen L."/>
            <person name="Jiang Y."/>
            <person name="Yan Y."/>
            <person name="Tang X."/>
            <person name="Wang J."/>
            <person name="Xiong Z."/>
            <person name="Dong J."/>
            <person name="Xue Y."/>
            <person name="Zhu Y."/>
            <person name="Xu X."/>
            <person name="Sun L."/>
            <person name="Chen S."/>
            <person name="Nie H."/>
            <person name="Peng J."/>
            <person name="Xu J."/>
            <person name="Wang Y."/>
            <person name="Yuan Z."/>
            <person name="Wen Y."/>
            <person name="Yao Z."/>
            <person name="Shen Y."/>
            <person name="Qiang B."/>
            <person name="Hou Y."/>
            <person name="Yu J."/>
            <person name="Jin Q."/>
        </authorList>
    </citation>
    <scope>NUCLEOTIDE SEQUENCE [LARGE SCALE GENOMIC DNA]</scope>
    <source>
        <strain>Sb227</strain>
    </source>
</reference>
<feature type="chain" id="PRO_0000315583" description="Uncharacterized Nudix hydrolase NudL">
    <location>
        <begin position="1"/>
        <end position="192"/>
    </location>
</feature>
<feature type="domain" description="Nudix hydrolase" evidence="1">
    <location>
        <begin position="29"/>
        <end position="160"/>
    </location>
</feature>
<feature type="short sequence motif" description="Nudix box">
    <location>
        <begin position="67"/>
        <end position="89"/>
    </location>
</feature>
<feature type="binding site" evidence="1">
    <location>
        <position position="83"/>
    </location>
    <ligand>
        <name>Mg(2+)</name>
        <dbReference type="ChEBI" id="CHEBI:18420"/>
    </ligand>
</feature>
<feature type="binding site" evidence="1">
    <location>
        <position position="87"/>
    </location>
    <ligand>
        <name>Mg(2+)</name>
        <dbReference type="ChEBI" id="CHEBI:18420"/>
    </ligand>
</feature>
<sequence length="192" mass="21478">MEYRSLTLDDFLSRFQLLRPQINRETLNHRQAAVLIPIVRRPQPGLLLTQRSIHLRKHAGQVAFPGGAVDDTDASVIAAALREAEEEVAIPPSAVEVIGVLPPVDSVTGYQVTPVIGIIPPDLPYRASEDEVSAVFEMPLAQALHLGRYHPLDIYRRGDSHRVWLSWYEQYFVWGMTAGIIRELALQIGVKP</sequence>
<evidence type="ECO:0000255" key="1">
    <source>
        <dbReference type="HAMAP-Rule" id="MF_01592"/>
    </source>
</evidence>